<sequence length="740" mass="80562">MPEQHPPITETTTGAASNGCPVVGHMKYPVEGGGNQDWWPNRLNLKVLHQNPAVADPMGAAFDYAAEVATIDVDALTRDIEEVMTTSQPWWPADYGHYGPLFIRMAWHAAGTYRIHDGRGGAGGGMQRFAPLNSWPDNASLDKARRLLWPVKKKYGKKLSWADLIVFAGNCALESMGFKTFGFGFGRVDQWEPDEVYWGKEATWLGDERYSGKRDLENPLAAVQMGLIYVNPEGPNGNPDPMAAAVDIRETFRRMAMNDVETAALIVGGHTFGKTHGAGPADLVGPEPEAAPLEQMGLGWKSSYGTGTGKDAITSGIEVVWTNTPTKWDNSFLEILYGYEWELTKSPAGAWQYTAKDGAGAGTIPDPFGGPGRSPTMLATDLSLRVDPIYERITRRWLEHPEELADEFAKAWYKLIHRDMGPVARYLGPLVPKQTLLWQDPVPAVSHDLVGEAEIASLKSQILASGLTVSQLVSTAWAAASSFRGSDKRGGANGGRIRLQPQVGWEVNDPDGDLRKVIRTLEEIQESFNSAAPGNIKVSFADLVVLGGCAAIEKAAKAAGHNITVPFTPGRTDASQEQTDVESFAVLEPKADGFRNYLGKGNPLPAEYMLLDKANLLTLSAPEMTVLVGGLRVLGANYKRLPLGVFTEASESLTNDFFVNLLDMGITWEPSPADDGTYQGKDGSGKVKWTGSRVDLVFGSNSELRALVEVYGADDAQPKFVQDFVAAWDKVMNLDRFDVR</sequence>
<protein>
    <recommendedName>
        <fullName evidence="1">Catalase-peroxidase</fullName>
        <shortName evidence="1">CP</shortName>
        <ecNumber evidence="1">1.11.1.21</ecNumber>
    </recommendedName>
    <alternativeName>
        <fullName evidence="1">Peroxidase/catalase</fullName>
    </alternativeName>
</protein>
<feature type="chain" id="PRO_1000189072" description="Catalase-peroxidase">
    <location>
        <begin position="1"/>
        <end position="740"/>
    </location>
</feature>
<feature type="active site" description="Proton acceptor" evidence="1">
    <location>
        <position position="108"/>
    </location>
</feature>
<feature type="binding site" description="axial binding residue" evidence="1">
    <location>
        <position position="270"/>
    </location>
    <ligand>
        <name>heme b</name>
        <dbReference type="ChEBI" id="CHEBI:60344"/>
    </ligand>
    <ligandPart>
        <name>Fe</name>
        <dbReference type="ChEBI" id="CHEBI:18248"/>
    </ligandPart>
</feature>
<feature type="site" description="Transition state stabilizer" evidence="1">
    <location>
        <position position="104"/>
    </location>
</feature>
<feature type="cross-link" description="Tryptophyl-tyrosyl-methioninium (Trp-Tyr) (with M-255)" evidence="1">
    <location>
        <begin position="107"/>
        <end position="229"/>
    </location>
</feature>
<feature type="cross-link" description="Tryptophyl-tyrosyl-methioninium (Tyr-Met) (with W-107)" evidence="1">
    <location>
        <begin position="229"/>
        <end position="255"/>
    </location>
</feature>
<reference key="1">
    <citation type="journal article" date="2009" name="Vaccine">
        <title>Whole genome sequence analysis of Mycobacterium bovis bacillus Calmette-Guerin (BCG) Tokyo 172: a comparative study of BCG vaccine substrains.</title>
        <authorList>
            <person name="Seki M."/>
            <person name="Honda I."/>
            <person name="Fujita I."/>
            <person name="Yano I."/>
            <person name="Yamamoto S."/>
            <person name="Koyama A."/>
        </authorList>
    </citation>
    <scope>NUCLEOTIDE SEQUENCE [LARGE SCALE GENOMIC DNA]</scope>
    <source>
        <strain>BCG / Tokyo 172 / ATCC 35737 / TMC 1019</strain>
    </source>
</reference>
<accession>C1API8</accession>
<comment type="function">
    <text evidence="1">Bifunctional enzyme with both catalase and broad-spectrum peroxidase activity.</text>
</comment>
<comment type="catalytic activity">
    <reaction evidence="1">
        <text>H2O2 + AH2 = A + 2 H2O</text>
        <dbReference type="Rhea" id="RHEA:30275"/>
        <dbReference type="ChEBI" id="CHEBI:13193"/>
        <dbReference type="ChEBI" id="CHEBI:15377"/>
        <dbReference type="ChEBI" id="CHEBI:16240"/>
        <dbReference type="ChEBI" id="CHEBI:17499"/>
        <dbReference type="EC" id="1.11.1.21"/>
    </reaction>
</comment>
<comment type="catalytic activity">
    <reaction evidence="1">
        <text>2 H2O2 = O2 + 2 H2O</text>
        <dbReference type="Rhea" id="RHEA:20309"/>
        <dbReference type="ChEBI" id="CHEBI:15377"/>
        <dbReference type="ChEBI" id="CHEBI:15379"/>
        <dbReference type="ChEBI" id="CHEBI:16240"/>
        <dbReference type="EC" id="1.11.1.21"/>
    </reaction>
</comment>
<comment type="cofactor">
    <cofactor evidence="1">
        <name>heme b</name>
        <dbReference type="ChEBI" id="CHEBI:60344"/>
    </cofactor>
    <text evidence="1">Binds 1 heme b (iron(II)-protoporphyrin IX) group per dimer.</text>
</comment>
<comment type="subunit">
    <text evidence="1">Homodimer or homotetramer.</text>
</comment>
<comment type="PTM">
    <text evidence="1">Formation of the three residue Trp-Tyr-Met cross-link is important for the catalase, but not the peroxidase activity of the enzyme.</text>
</comment>
<comment type="similarity">
    <text evidence="1">Belongs to the peroxidase family. Peroxidase/catalase subfamily.</text>
</comment>
<dbReference type="EC" id="1.11.1.21" evidence="1"/>
<dbReference type="EMBL" id="AP010918">
    <property type="protein sequence ID" value="BAH26217.1"/>
    <property type="molecule type" value="Genomic_DNA"/>
</dbReference>
<dbReference type="RefSeq" id="WP_003901285.1">
    <property type="nucleotide sequence ID" value="NZ_CP014566.1"/>
</dbReference>
<dbReference type="SMR" id="C1API8"/>
<dbReference type="GeneID" id="45425879"/>
<dbReference type="KEGG" id="mbt:JTY_1931"/>
<dbReference type="HOGENOM" id="CLU_025424_2_0_11"/>
<dbReference type="GO" id="GO:0005829">
    <property type="term" value="C:cytosol"/>
    <property type="evidence" value="ECO:0007669"/>
    <property type="project" value="TreeGrafter"/>
</dbReference>
<dbReference type="GO" id="GO:0004096">
    <property type="term" value="F:catalase activity"/>
    <property type="evidence" value="ECO:0007669"/>
    <property type="project" value="UniProtKB-UniRule"/>
</dbReference>
<dbReference type="GO" id="GO:0020037">
    <property type="term" value="F:heme binding"/>
    <property type="evidence" value="ECO:0007669"/>
    <property type="project" value="InterPro"/>
</dbReference>
<dbReference type="GO" id="GO:0046872">
    <property type="term" value="F:metal ion binding"/>
    <property type="evidence" value="ECO:0007669"/>
    <property type="project" value="UniProtKB-KW"/>
</dbReference>
<dbReference type="GO" id="GO:0070301">
    <property type="term" value="P:cellular response to hydrogen peroxide"/>
    <property type="evidence" value="ECO:0007669"/>
    <property type="project" value="TreeGrafter"/>
</dbReference>
<dbReference type="GO" id="GO:0042744">
    <property type="term" value="P:hydrogen peroxide catabolic process"/>
    <property type="evidence" value="ECO:0007669"/>
    <property type="project" value="UniProtKB-KW"/>
</dbReference>
<dbReference type="CDD" id="cd00649">
    <property type="entry name" value="catalase_peroxidase_1"/>
    <property type="match status" value="1"/>
</dbReference>
<dbReference type="CDD" id="cd08200">
    <property type="entry name" value="catalase_peroxidase_2"/>
    <property type="match status" value="1"/>
</dbReference>
<dbReference type="FunFam" id="1.10.420.10:FF:000002">
    <property type="entry name" value="Catalase-peroxidase"/>
    <property type="match status" value="1"/>
</dbReference>
<dbReference type="FunFam" id="1.10.420.10:FF:000004">
    <property type="entry name" value="Catalase-peroxidase"/>
    <property type="match status" value="1"/>
</dbReference>
<dbReference type="FunFam" id="1.10.520.10:FF:000002">
    <property type="entry name" value="Catalase-peroxidase"/>
    <property type="match status" value="1"/>
</dbReference>
<dbReference type="Gene3D" id="1.10.520.10">
    <property type="match status" value="2"/>
</dbReference>
<dbReference type="Gene3D" id="1.10.420.10">
    <property type="entry name" value="Peroxidase, domain 2"/>
    <property type="match status" value="2"/>
</dbReference>
<dbReference type="HAMAP" id="MF_01961">
    <property type="entry name" value="Catal_peroxid"/>
    <property type="match status" value="1"/>
</dbReference>
<dbReference type="InterPro" id="IPR000763">
    <property type="entry name" value="Catalase_peroxidase"/>
</dbReference>
<dbReference type="InterPro" id="IPR002016">
    <property type="entry name" value="Haem_peroxidase"/>
</dbReference>
<dbReference type="InterPro" id="IPR010255">
    <property type="entry name" value="Haem_peroxidase_sf"/>
</dbReference>
<dbReference type="InterPro" id="IPR019794">
    <property type="entry name" value="Peroxidases_AS"/>
</dbReference>
<dbReference type="InterPro" id="IPR019793">
    <property type="entry name" value="Peroxidases_heam-ligand_BS"/>
</dbReference>
<dbReference type="NCBIfam" id="TIGR00198">
    <property type="entry name" value="cat_per_HPI"/>
    <property type="match status" value="1"/>
</dbReference>
<dbReference type="NCBIfam" id="NF011635">
    <property type="entry name" value="PRK15061.1"/>
    <property type="match status" value="1"/>
</dbReference>
<dbReference type="PANTHER" id="PTHR30555:SF0">
    <property type="entry name" value="CATALASE-PEROXIDASE"/>
    <property type="match status" value="1"/>
</dbReference>
<dbReference type="PANTHER" id="PTHR30555">
    <property type="entry name" value="HYDROPEROXIDASE I, BIFUNCTIONAL CATALASE-PEROXIDASE"/>
    <property type="match status" value="1"/>
</dbReference>
<dbReference type="Pfam" id="PF00141">
    <property type="entry name" value="peroxidase"/>
    <property type="match status" value="2"/>
</dbReference>
<dbReference type="PRINTS" id="PR00460">
    <property type="entry name" value="BPEROXIDASE"/>
</dbReference>
<dbReference type="PRINTS" id="PR00458">
    <property type="entry name" value="PEROXIDASE"/>
</dbReference>
<dbReference type="SUPFAM" id="SSF48113">
    <property type="entry name" value="Heme-dependent peroxidases"/>
    <property type="match status" value="2"/>
</dbReference>
<dbReference type="PROSITE" id="PS00435">
    <property type="entry name" value="PEROXIDASE_1"/>
    <property type="match status" value="1"/>
</dbReference>
<dbReference type="PROSITE" id="PS00436">
    <property type="entry name" value="PEROXIDASE_2"/>
    <property type="match status" value="1"/>
</dbReference>
<dbReference type="PROSITE" id="PS50873">
    <property type="entry name" value="PEROXIDASE_4"/>
    <property type="match status" value="1"/>
</dbReference>
<gene>
    <name evidence="1" type="primary">katG</name>
    <name type="ordered locus">JTY_1931</name>
</gene>
<organism>
    <name type="scientific">Mycobacterium bovis (strain BCG / Tokyo 172 / ATCC 35737 / TMC 1019)</name>
    <dbReference type="NCBI Taxonomy" id="561275"/>
    <lineage>
        <taxon>Bacteria</taxon>
        <taxon>Bacillati</taxon>
        <taxon>Actinomycetota</taxon>
        <taxon>Actinomycetes</taxon>
        <taxon>Mycobacteriales</taxon>
        <taxon>Mycobacteriaceae</taxon>
        <taxon>Mycobacterium</taxon>
        <taxon>Mycobacterium tuberculosis complex</taxon>
    </lineage>
</organism>
<name>KATG_MYCBT</name>
<keyword id="KW-0349">Heme</keyword>
<keyword id="KW-0376">Hydrogen peroxide</keyword>
<keyword id="KW-0408">Iron</keyword>
<keyword id="KW-0479">Metal-binding</keyword>
<keyword id="KW-0560">Oxidoreductase</keyword>
<keyword id="KW-0575">Peroxidase</keyword>
<evidence type="ECO:0000255" key="1">
    <source>
        <dbReference type="HAMAP-Rule" id="MF_01961"/>
    </source>
</evidence>
<proteinExistence type="inferred from homology"/>